<evidence type="ECO:0000250" key="1">
    <source>
        <dbReference type="UniProtKB" id="O95202"/>
    </source>
</evidence>
<evidence type="ECO:0000250" key="2">
    <source>
        <dbReference type="UniProtKB" id="Q9Z2I0"/>
    </source>
</evidence>
<evidence type="ECO:0000255" key="3"/>
<evidence type="ECO:0000255" key="4">
    <source>
        <dbReference type="PROSITE-ProRule" id="PRU00448"/>
    </source>
</evidence>
<evidence type="ECO:0000255" key="5">
    <source>
        <dbReference type="PROSITE-ProRule" id="PRU01094"/>
    </source>
</evidence>
<evidence type="ECO:0000305" key="6"/>
<feature type="transit peptide" description="Mitochondrion" evidence="3">
    <location>
        <begin position="1"/>
        <end position="113"/>
    </location>
</feature>
<feature type="chain" id="PRO_0000380703" description="Mitochondrial proton/calcium exchanger protein">
    <location>
        <begin position="114"/>
        <end position="757"/>
    </location>
</feature>
<feature type="topological domain" description="Mitochondrial intermembrane" evidence="1">
    <location>
        <begin position="114"/>
        <end position="215"/>
    </location>
</feature>
<feature type="transmembrane region" description="Helical" evidence="3">
    <location>
        <begin position="216"/>
        <end position="236"/>
    </location>
</feature>
<feature type="topological domain" description="Mitochondrial matrix" evidence="1">
    <location>
        <begin position="237"/>
        <end position="757"/>
    </location>
</feature>
<feature type="domain" description="Letm1 RBD" evidence="5">
    <location>
        <begin position="259"/>
        <end position="552"/>
    </location>
</feature>
<feature type="domain" description="EF-hand" evidence="4">
    <location>
        <begin position="680"/>
        <end position="715"/>
    </location>
</feature>
<feature type="coiled-coil region" evidence="3">
    <location>
        <begin position="476"/>
        <end position="521"/>
    </location>
</feature>
<feature type="coiled-coil region" evidence="3">
    <location>
        <begin position="554"/>
        <end position="618"/>
    </location>
</feature>
<feature type="coiled-coil region" evidence="3">
    <location>
        <begin position="722"/>
        <end position="755"/>
    </location>
</feature>
<feature type="binding site" evidence="4">
    <location>
        <position position="693"/>
    </location>
    <ligand>
        <name>Ca(2+)</name>
        <dbReference type="ChEBI" id="CHEBI:29108"/>
    </ligand>
</feature>
<feature type="binding site" evidence="4">
    <location>
        <position position="695"/>
    </location>
    <ligand>
        <name>Ca(2+)</name>
        <dbReference type="ChEBI" id="CHEBI:29108"/>
    </ligand>
</feature>
<feature type="binding site" evidence="4">
    <location>
        <position position="697"/>
    </location>
    <ligand>
        <name>Ca(2+)</name>
        <dbReference type="ChEBI" id="CHEBI:29108"/>
    </ligand>
</feature>
<feature type="binding site" evidence="4">
    <location>
        <position position="699"/>
    </location>
    <ligand>
        <name>Ca(2+)</name>
        <dbReference type="ChEBI" id="CHEBI:29108"/>
    </ligand>
</feature>
<feature type="binding site" evidence="4">
    <location>
        <position position="704"/>
    </location>
    <ligand>
        <name>Ca(2+)</name>
        <dbReference type="ChEBI" id="CHEBI:29108"/>
    </ligand>
</feature>
<feature type="sequence conflict" description="In Ref. 1; CAK03660." evidence="6" ref="1">
    <original>R</original>
    <variation>L</variation>
    <location>
        <position position="72"/>
    </location>
</feature>
<reference key="1">
    <citation type="journal article" date="2013" name="Nature">
        <title>The zebrafish reference genome sequence and its relationship to the human genome.</title>
        <authorList>
            <person name="Howe K."/>
            <person name="Clark M.D."/>
            <person name="Torroja C.F."/>
            <person name="Torrance J."/>
            <person name="Berthelot C."/>
            <person name="Muffato M."/>
            <person name="Collins J.E."/>
            <person name="Humphray S."/>
            <person name="McLaren K."/>
            <person name="Matthews L."/>
            <person name="McLaren S."/>
            <person name="Sealy I."/>
            <person name="Caccamo M."/>
            <person name="Churcher C."/>
            <person name="Scott C."/>
            <person name="Barrett J.C."/>
            <person name="Koch R."/>
            <person name="Rauch G.J."/>
            <person name="White S."/>
            <person name="Chow W."/>
            <person name="Kilian B."/>
            <person name="Quintais L.T."/>
            <person name="Guerra-Assuncao J.A."/>
            <person name="Zhou Y."/>
            <person name="Gu Y."/>
            <person name="Yen J."/>
            <person name="Vogel J.H."/>
            <person name="Eyre T."/>
            <person name="Redmond S."/>
            <person name="Banerjee R."/>
            <person name="Chi J."/>
            <person name="Fu B."/>
            <person name="Langley E."/>
            <person name="Maguire S.F."/>
            <person name="Laird G.K."/>
            <person name="Lloyd D."/>
            <person name="Kenyon E."/>
            <person name="Donaldson S."/>
            <person name="Sehra H."/>
            <person name="Almeida-King J."/>
            <person name="Loveland J."/>
            <person name="Trevanion S."/>
            <person name="Jones M."/>
            <person name="Quail M."/>
            <person name="Willey D."/>
            <person name="Hunt A."/>
            <person name="Burton J."/>
            <person name="Sims S."/>
            <person name="McLay K."/>
            <person name="Plumb B."/>
            <person name="Davis J."/>
            <person name="Clee C."/>
            <person name="Oliver K."/>
            <person name="Clark R."/>
            <person name="Riddle C."/>
            <person name="Elliot D."/>
            <person name="Threadgold G."/>
            <person name="Harden G."/>
            <person name="Ware D."/>
            <person name="Begum S."/>
            <person name="Mortimore B."/>
            <person name="Kerry G."/>
            <person name="Heath P."/>
            <person name="Phillimore B."/>
            <person name="Tracey A."/>
            <person name="Corby N."/>
            <person name="Dunn M."/>
            <person name="Johnson C."/>
            <person name="Wood J."/>
            <person name="Clark S."/>
            <person name="Pelan S."/>
            <person name="Griffiths G."/>
            <person name="Smith M."/>
            <person name="Glithero R."/>
            <person name="Howden P."/>
            <person name="Barker N."/>
            <person name="Lloyd C."/>
            <person name="Stevens C."/>
            <person name="Harley J."/>
            <person name="Holt K."/>
            <person name="Panagiotidis G."/>
            <person name="Lovell J."/>
            <person name="Beasley H."/>
            <person name="Henderson C."/>
            <person name="Gordon D."/>
            <person name="Auger K."/>
            <person name="Wright D."/>
            <person name="Collins J."/>
            <person name="Raisen C."/>
            <person name="Dyer L."/>
            <person name="Leung K."/>
            <person name="Robertson L."/>
            <person name="Ambridge K."/>
            <person name="Leongamornlert D."/>
            <person name="McGuire S."/>
            <person name="Gilderthorp R."/>
            <person name="Griffiths C."/>
            <person name="Manthravadi D."/>
            <person name="Nichol S."/>
            <person name="Barker G."/>
            <person name="Whitehead S."/>
            <person name="Kay M."/>
            <person name="Brown J."/>
            <person name="Murnane C."/>
            <person name="Gray E."/>
            <person name="Humphries M."/>
            <person name="Sycamore N."/>
            <person name="Barker D."/>
            <person name="Saunders D."/>
            <person name="Wallis J."/>
            <person name="Babbage A."/>
            <person name="Hammond S."/>
            <person name="Mashreghi-Mohammadi M."/>
            <person name="Barr L."/>
            <person name="Martin S."/>
            <person name="Wray P."/>
            <person name="Ellington A."/>
            <person name="Matthews N."/>
            <person name="Ellwood M."/>
            <person name="Woodmansey R."/>
            <person name="Clark G."/>
            <person name="Cooper J."/>
            <person name="Tromans A."/>
            <person name="Grafham D."/>
            <person name="Skuce C."/>
            <person name="Pandian R."/>
            <person name="Andrews R."/>
            <person name="Harrison E."/>
            <person name="Kimberley A."/>
            <person name="Garnett J."/>
            <person name="Fosker N."/>
            <person name="Hall R."/>
            <person name="Garner P."/>
            <person name="Kelly D."/>
            <person name="Bird C."/>
            <person name="Palmer S."/>
            <person name="Gehring I."/>
            <person name="Berger A."/>
            <person name="Dooley C.M."/>
            <person name="Ersan-Urun Z."/>
            <person name="Eser C."/>
            <person name="Geiger H."/>
            <person name="Geisler M."/>
            <person name="Karotki L."/>
            <person name="Kirn A."/>
            <person name="Konantz J."/>
            <person name="Konantz M."/>
            <person name="Oberlander M."/>
            <person name="Rudolph-Geiger S."/>
            <person name="Teucke M."/>
            <person name="Lanz C."/>
            <person name="Raddatz G."/>
            <person name="Osoegawa K."/>
            <person name="Zhu B."/>
            <person name="Rapp A."/>
            <person name="Widaa S."/>
            <person name="Langford C."/>
            <person name="Yang F."/>
            <person name="Schuster S.C."/>
            <person name="Carter N.P."/>
            <person name="Harrow J."/>
            <person name="Ning Z."/>
            <person name="Herrero J."/>
            <person name="Searle S.M."/>
            <person name="Enright A."/>
            <person name="Geisler R."/>
            <person name="Plasterk R.H."/>
            <person name="Lee C."/>
            <person name="Westerfield M."/>
            <person name="de Jong P.J."/>
            <person name="Zon L.I."/>
            <person name="Postlethwait J.H."/>
            <person name="Nusslein-Volhard C."/>
            <person name="Hubbard T.J."/>
            <person name="Roest Crollius H."/>
            <person name="Rogers J."/>
            <person name="Stemple D.L."/>
        </authorList>
    </citation>
    <scope>NUCLEOTIDE SEQUENCE [LARGE SCALE GENOMIC DNA]</scope>
    <source>
        <strain>Tuebingen</strain>
    </source>
</reference>
<sequence>MASILLTRSRTPLLKTSRSLKNEFRKGKLSEGACFNCTALRLATNSPGVLGGIVWPHASSVQYLDNSSVLQRRLSRSPRLYCAILVPDPALPVHSRSTYHRTLAWPQNAPVRWVHTTGRLLDDSKVERSLRTLKDRNKKLEEGGPVYSPTVDAEPVRRTIRQRVIDEVKHYYHGFRLLWIDTTIAVRMLWRVLNGHILSRRERRQFLRTCADVFRLLPFLVFIIVPFMEFLLPVALKLFPNMLPSTFETQSKKEERLKKELRVKLEMAKFLQDTIEEIALRNKASKGNVTEEFSTFFQKIRDSGEIPSNEQIIRFSKLFEDELTLDNLTRPQLVALCKLLELQSIGTNNFLRFQLIMKLRAIRADDKLIAEEGVDSLTANELQAACRVRGMRALGVTEERLREQLKQWLELHLNQHIPTSLLLLSRAMFLPDTLSPADQLKTTLQNLPEIMAKEAQVKVAELDFSKVDNKTKLETTLQEEAAIRQENRERELERLADAAEKAKEQTQSQEAEVLEVEGERRVDAEHALSSVDVAIHSETLRDTAPVLEGIKGEEITKEEIDMLSDACTKLKEQKNLLTKEKEELEDLKDDVQEYSEDLEEIKRELSKTGQEKAVEESKASQRLSKRVNRMIGRMDKIITELEKDKMVLDGQMDSETTPPIGENLISINELITVMKQIQNIPEHKLLSIADALDENKDGKIDIDDVIKVVELIDKEDIDISTNQVAEIMVMLQKEEKLMEKEKAKEKVEKEQAAKIQN</sequence>
<accession>Q1LY46</accession>
<accession>B8JIA3</accession>
<protein>
    <recommendedName>
        <fullName evidence="6">Mitochondrial proton/calcium exchanger protein</fullName>
    </recommendedName>
    <alternativeName>
        <fullName evidence="1">Electroneutral mitochondrial K(+)/H(+)exchanger</fullName>
        <shortName evidence="1">KHE</shortName>
    </alternativeName>
    <alternativeName>
        <fullName>Leucine zipper-EF-hand-containing transmembrane protein 1</fullName>
    </alternativeName>
</protein>
<name>LETM1_DANRE</name>
<organism>
    <name type="scientific">Danio rerio</name>
    <name type="common">Zebrafish</name>
    <name type="synonym">Brachydanio rerio</name>
    <dbReference type="NCBI Taxonomy" id="7955"/>
    <lineage>
        <taxon>Eukaryota</taxon>
        <taxon>Metazoa</taxon>
        <taxon>Chordata</taxon>
        <taxon>Craniata</taxon>
        <taxon>Vertebrata</taxon>
        <taxon>Euteleostomi</taxon>
        <taxon>Actinopterygii</taxon>
        <taxon>Neopterygii</taxon>
        <taxon>Teleostei</taxon>
        <taxon>Ostariophysi</taxon>
        <taxon>Cypriniformes</taxon>
        <taxon>Danionidae</taxon>
        <taxon>Danioninae</taxon>
        <taxon>Danio</taxon>
    </lineage>
</organism>
<dbReference type="EMBL" id="BX119973">
    <property type="protein sequence ID" value="CAK03660.1"/>
    <property type="molecule type" value="Genomic_DNA"/>
</dbReference>
<dbReference type="EMBL" id="CR556722">
    <property type="protein sequence ID" value="CAX14247.1"/>
    <property type="molecule type" value="Genomic_DNA"/>
</dbReference>
<dbReference type="RefSeq" id="NP_001038673.1">
    <property type="nucleotide sequence ID" value="NM_001045208.1"/>
</dbReference>
<dbReference type="SMR" id="Q1LY46"/>
<dbReference type="FunCoup" id="Q1LY46">
    <property type="interactions" value="2530"/>
</dbReference>
<dbReference type="STRING" id="7955.ENSDARP00000074011"/>
<dbReference type="PaxDb" id="7955-ENSDARP00000074011"/>
<dbReference type="Ensembl" id="ENSDART00000079558">
    <property type="protein sequence ID" value="ENSDARP00000074011"/>
    <property type="gene ID" value="ENSDARG00000056978"/>
</dbReference>
<dbReference type="GeneID" id="570745"/>
<dbReference type="KEGG" id="dre:570745"/>
<dbReference type="AGR" id="ZFIN:ZDB-GENE-050522-154"/>
<dbReference type="CTD" id="3954"/>
<dbReference type="ZFIN" id="ZDB-GENE-050522-154">
    <property type="gene designation" value="letm1"/>
</dbReference>
<dbReference type="eggNOG" id="KOG1043">
    <property type="taxonomic scope" value="Eukaryota"/>
</dbReference>
<dbReference type="HOGENOM" id="CLU_008958_2_1_1"/>
<dbReference type="InParanoid" id="Q1LY46"/>
<dbReference type="OrthoDB" id="624114at2759"/>
<dbReference type="PhylomeDB" id="Q1LY46"/>
<dbReference type="TreeFam" id="TF316321"/>
<dbReference type="PRO" id="PR:Q1LY46"/>
<dbReference type="Proteomes" id="UP000000437">
    <property type="component" value="Alternate scaffold 13"/>
</dbReference>
<dbReference type="Proteomes" id="UP000000437">
    <property type="component" value="Chromosome 13"/>
</dbReference>
<dbReference type="Bgee" id="ENSDARG00000056978">
    <property type="expression patterns" value="Expressed in testis and 26 other cell types or tissues"/>
</dbReference>
<dbReference type="ExpressionAtlas" id="Q1LY46">
    <property type="expression patterns" value="baseline and differential"/>
</dbReference>
<dbReference type="GO" id="GO:0005743">
    <property type="term" value="C:mitochondrial inner membrane"/>
    <property type="evidence" value="ECO:0000250"/>
    <property type="project" value="UniProtKB"/>
</dbReference>
<dbReference type="GO" id="GO:0005739">
    <property type="term" value="C:mitochondrion"/>
    <property type="evidence" value="ECO:0000318"/>
    <property type="project" value="GO_Central"/>
</dbReference>
<dbReference type="GO" id="GO:0005509">
    <property type="term" value="F:calcium ion binding"/>
    <property type="evidence" value="ECO:0007669"/>
    <property type="project" value="InterPro"/>
</dbReference>
<dbReference type="GO" id="GO:0015369">
    <property type="term" value="F:calcium:proton antiporter activity"/>
    <property type="evidence" value="ECO:0000250"/>
    <property type="project" value="UniProtKB"/>
</dbReference>
<dbReference type="GO" id="GO:0043022">
    <property type="term" value="F:ribosome binding"/>
    <property type="evidence" value="ECO:0007669"/>
    <property type="project" value="InterPro"/>
</dbReference>
<dbReference type="GO" id="GO:0099093">
    <property type="term" value="P:calcium export from the mitochondrion"/>
    <property type="evidence" value="ECO:0000250"/>
    <property type="project" value="UniProtKB"/>
</dbReference>
<dbReference type="GO" id="GO:0006816">
    <property type="term" value="P:calcium ion transport"/>
    <property type="evidence" value="ECO:0000250"/>
    <property type="project" value="UniProtKB"/>
</dbReference>
<dbReference type="GO" id="GO:0007007">
    <property type="term" value="P:inner mitochondrial membrane organization"/>
    <property type="evidence" value="ECO:0000250"/>
    <property type="project" value="UniProtKB"/>
</dbReference>
<dbReference type="GO" id="GO:0051560">
    <property type="term" value="P:mitochondrial calcium ion homeostasis"/>
    <property type="evidence" value="ECO:0000250"/>
    <property type="project" value="UniProtKB"/>
</dbReference>
<dbReference type="GO" id="GO:0006851">
    <property type="term" value="P:mitochondrial calcium ion transmembrane transport"/>
    <property type="evidence" value="ECO:0000250"/>
    <property type="project" value="UniProtKB"/>
</dbReference>
<dbReference type="GO" id="GO:0007005">
    <property type="term" value="P:mitochondrion organization"/>
    <property type="evidence" value="ECO:0000318"/>
    <property type="project" value="GO_Central"/>
</dbReference>
<dbReference type="GO" id="GO:0006813">
    <property type="term" value="P:potassium ion transport"/>
    <property type="evidence" value="ECO:0007669"/>
    <property type="project" value="UniProtKB-KW"/>
</dbReference>
<dbReference type="GO" id="GO:0034214">
    <property type="term" value="P:protein hexamerization"/>
    <property type="evidence" value="ECO:0000250"/>
    <property type="project" value="UniProtKB"/>
</dbReference>
<dbReference type="GO" id="GO:0051260">
    <property type="term" value="P:protein homooligomerization"/>
    <property type="evidence" value="ECO:0000250"/>
    <property type="project" value="UniProtKB"/>
</dbReference>
<dbReference type="FunFam" id="1.10.238.10:FF:000290">
    <property type="entry name" value="LETM1 and EF-hand domain-containing protein 1, mitochondrial"/>
    <property type="match status" value="1"/>
</dbReference>
<dbReference type="Gene3D" id="1.10.238.10">
    <property type="entry name" value="EF-hand"/>
    <property type="match status" value="1"/>
</dbReference>
<dbReference type="InterPro" id="IPR011992">
    <property type="entry name" value="EF-hand-dom_pair"/>
</dbReference>
<dbReference type="InterPro" id="IPR018247">
    <property type="entry name" value="EF_Hand_1_Ca_BS"/>
</dbReference>
<dbReference type="InterPro" id="IPR002048">
    <property type="entry name" value="EF_hand_dom"/>
</dbReference>
<dbReference type="InterPro" id="IPR033122">
    <property type="entry name" value="LETM1-like_RBD"/>
</dbReference>
<dbReference type="InterPro" id="IPR044202">
    <property type="entry name" value="LETM1/MDM38-like"/>
</dbReference>
<dbReference type="PANTHER" id="PTHR14009">
    <property type="entry name" value="LEUCINE ZIPPER-EF-HAND CONTAINING TRANSMEMBRANE PROTEIN"/>
    <property type="match status" value="1"/>
</dbReference>
<dbReference type="PANTHER" id="PTHR14009:SF8">
    <property type="entry name" value="MITOCHONDRIAL PROTON_CALCIUM EXCHANGER PROTEIN"/>
    <property type="match status" value="1"/>
</dbReference>
<dbReference type="Pfam" id="PF07766">
    <property type="entry name" value="LETM1_RBD"/>
    <property type="match status" value="1"/>
</dbReference>
<dbReference type="SUPFAM" id="SSF47473">
    <property type="entry name" value="EF-hand"/>
    <property type="match status" value="1"/>
</dbReference>
<dbReference type="PROSITE" id="PS00018">
    <property type="entry name" value="EF_HAND_1"/>
    <property type="match status" value="1"/>
</dbReference>
<dbReference type="PROSITE" id="PS50222">
    <property type="entry name" value="EF_HAND_2"/>
    <property type="match status" value="1"/>
</dbReference>
<dbReference type="PROSITE" id="PS51758">
    <property type="entry name" value="LETM1_RBD"/>
    <property type="match status" value="1"/>
</dbReference>
<keyword id="KW-0050">Antiport</keyword>
<keyword id="KW-0106">Calcium</keyword>
<keyword id="KW-0109">Calcium transport</keyword>
<keyword id="KW-0175">Coiled coil</keyword>
<keyword id="KW-0406">Ion transport</keyword>
<keyword id="KW-0472">Membrane</keyword>
<keyword id="KW-0479">Metal-binding</keyword>
<keyword id="KW-0496">Mitochondrion</keyword>
<keyword id="KW-0999">Mitochondrion inner membrane</keyword>
<keyword id="KW-0630">Potassium</keyword>
<keyword id="KW-0633">Potassium transport</keyword>
<keyword id="KW-1185">Reference proteome</keyword>
<keyword id="KW-0809">Transit peptide</keyword>
<keyword id="KW-0812">Transmembrane</keyword>
<keyword id="KW-1133">Transmembrane helix</keyword>
<keyword id="KW-0813">Transport</keyword>
<comment type="function">
    <text evidence="1 2">Plays an important role in maintenance of mitochondrial morphology and in mediating either calcium or potassium/proton antiport (By similarity). Mediates proton-dependent calcium efflux from mitochondrion (By similarity). Also functions as an electroneutral mitochondrial proton/potassium exchanger (By similarity). Required for the maintenance of the tubular shape and cristae organization (By similarity).</text>
</comment>
<comment type="catalytic activity">
    <reaction evidence="1">
        <text>Ca(2+)(in) + 2 H(+)(out) = Ca(2+)(out) + 2 H(+)(in)</text>
        <dbReference type="Rhea" id="RHEA:72199"/>
        <dbReference type="ChEBI" id="CHEBI:15378"/>
        <dbReference type="ChEBI" id="CHEBI:29108"/>
    </reaction>
</comment>
<comment type="catalytic activity">
    <reaction evidence="1">
        <text>K(+)(in) + H(+)(out) = K(+)(out) + H(+)(in)</text>
        <dbReference type="Rhea" id="RHEA:29467"/>
        <dbReference type="ChEBI" id="CHEBI:15378"/>
        <dbReference type="ChEBI" id="CHEBI:29103"/>
    </reaction>
</comment>
<comment type="subunit">
    <text evidence="2">Homohexamer.</text>
</comment>
<comment type="subcellular location">
    <subcellularLocation>
        <location evidence="2">Mitochondrion inner membrane</location>
        <topology evidence="3">Single-pass membrane protein</topology>
    </subcellularLocation>
</comment>
<comment type="similarity">
    <text evidence="6">Belongs to the LETM1 family.</text>
</comment>
<proteinExistence type="inferred from homology"/>
<gene>
    <name type="primary">letm1</name>
    <name type="ORF">si:ch211-195n12.1</name>
    <name type="ORF">si:rp71-77d7.1</name>
</gene>